<proteinExistence type="inferred from homology"/>
<evidence type="ECO:0000250" key="1"/>
<evidence type="ECO:0000255" key="2">
    <source>
        <dbReference type="HAMAP-Rule" id="MF_01320"/>
    </source>
</evidence>
<evidence type="ECO:0000256" key="3">
    <source>
        <dbReference type="SAM" id="MobiDB-lite"/>
    </source>
</evidence>
<evidence type="ECO:0000305" key="4"/>
<sequence length="273" mass="29860">MAVVKCKPTSPGRRHVVKVVNPELHKGKPFAPLLEKNSKSGGRNNNGRITTRHIGGGHKQAYRIVDFKRNKDGIPAVVERLEYDPNRSANIALVLYKDGERRYILAPKGLKAGDQIQSGVDAAIKPGNTLPMRNIPVGSTVHNVEMKPGKGGQLARSAGTYVQIVARDGAYVTLRLRSGEMRKVEADCRATLGEVGNAEHMLRVLGKAGAARWRGVRPTVRGTAMNPVDHPHGGGEGRNFGKHPVTPWGVQTKGKKTRSNKRTDKFIVRRRSK</sequence>
<accession>P60429</accession>
<accession>P02387</accession>
<protein>
    <recommendedName>
        <fullName evidence="2">Large ribosomal subunit protein uL2</fullName>
    </recommendedName>
    <alternativeName>
        <fullName evidence="4">50S ribosomal protein L2</fullName>
    </alternativeName>
</protein>
<organism>
    <name type="scientific">Shigella flexneri</name>
    <dbReference type="NCBI Taxonomy" id="623"/>
    <lineage>
        <taxon>Bacteria</taxon>
        <taxon>Pseudomonadati</taxon>
        <taxon>Pseudomonadota</taxon>
        <taxon>Gammaproteobacteria</taxon>
        <taxon>Enterobacterales</taxon>
        <taxon>Enterobacteriaceae</taxon>
        <taxon>Shigella</taxon>
    </lineage>
</organism>
<gene>
    <name evidence="2" type="primary">rplB</name>
    <name type="ordered locus">SF3349</name>
    <name type="ordered locus">S4413</name>
</gene>
<reference key="1">
    <citation type="journal article" date="2002" name="Nucleic Acids Res.">
        <title>Genome sequence of Shigella flexneri 2a: insights into pathogenicity through comparison with genomes of Escherichia coli K12 and O157.</title>
        <authorList>
            <person name="Jin Q."/>
            <person name="Yuan Z."/>
            <person name="Xu J."/>
            <person name="Wang Y."/>
            <person name="Shen Y."/>
            <person name="Lu W."/>
            <person name="Wang J."/>
            <person name="Liu H."/>
            <person name="Yang J."/>
            <person name="Yang F."/>
            <person name="Zhang X."/>
            <person name="Zhang J."/>
            <person name="Yang G."/>
            <person name="Wu H."/>
            <person name="Qu D."/>
            <person name="Dong J."/>
            <person name="Sun L."/>
            <person name="Xue Y."/>
            <person name="Zhao A."/>
            <person name="Gao Y."/>
            <person name="Zhu J."/>
            <person name="Kan B."/>
            <person name="Ding K."/>
            <person name="Chen S."/>
            <person name="Cheng H."/>
            <person name="Yao Z."/>
            <person name="He B."/>
            <person name="Chen R."/>
            <person name="Ma D."/>
            <person name="Qiang B."/>
            <person name="Wen Y."/>
            <person name="Hou Y."/>
            <person name="Yu J."/>
        </authorList>
    </citation>
    <scope>NUCLEOTIDE SEQUENCE [LARGE SCALE GENOMIC DNA]</scope>
    <source>
        <strain>301 / Serotype 2a</strain>
    </source>
</reference>
<reference key="2">
    <citation type="journal article" date="2003" name="Infect. Immun.">
        <title>Complete genome sequence and comparative genomics of Shigella flexneri serotype 2a strain 2457T.</title>
        <authorList>
            <person name="Wei J."/>
            <person name="Goldberg M.B."/>
            <person name="Burland V."/>
            <person name="Venkatesan M.M."/>
            <person name="Deng W."/>
            <person name="Fournier G."/>
            <person name="Mayhew G.F."/>
            <person name="Plunkett G. III"/>
            <person name="Rose D.J."/>
            <person name="Darling A."/>
            <person name="Mau B."/>
            <person name="Perna N.T."/>
            <person name="Payne S.M."/>
            <person name="Runyen-Janecky L.J."/>
            <person name="Zhou S."/>
            <person name="Schwartz D.C."/>
            <person name="Blattner F.R."/>
        </authorList>
    </citation>
    <scope>NUCLEOTIDE SEQUENCE [LARGE SCALE GENOMIC DNA]</scope>
    <source>
        <strain>ATCC 700930 / 2457T / Serotype 2a</strain>
    </source>
</reference>
<keyword id="KW-0007">Acetylation</keyword>
<keyword id="KW-1185">Reference proteome</keyword>
<keyword id="KW-0687">Ribonucleoprotein</keyword>
<keyword id="KW-0689">Ribosomal protein</keyword>
<keyword id="KW-0694">RNA-binding</keyword>
<keyword id="KW-0699">rRNA-binding</keyword>
<dbReference type="EMBL" id="AE005674">
    <property type="protein sequence ID" value="AAN44812.1"/>
    <property type="molecule type" value="Genomic_DNA"/>
</dbReference>
<dbReference type="EMBL" id="AE014073">
    <property type="protein sequence ID" value="AAP19364.1"/>
    <property type="molecule type" value="Genomic_DNA"/>
</dbReference>
<dbReference type="RefSeq" id="NP_709105.1">
    <property type="nucleotide sequence ID" value="NC_004337.2"/>
</dbReference>
<dbReference type="RefSeq" id="WP_000301864.1">
    <property type="nucleotide sequence ID" value="NZ_WPGW01000088.1"/>
</dbReference>
<dbReference type="SMR" id="P60429"/>
<dbReference type="STRING" id="198214.SF3349"/>
<dbReference type="PaxDb" id="198214-SF3349"/>
<dbReference type="GeneID" id="1027010"/>
<dbReference type="GeneID" id="93778670"/>
<dbReference type="KEGG" id="sfl:SF3349"/>
<dbReference type="KEGG" id="sfx:S4413"/>
<dbReference type="PATRIC" id="fig|198214.7.peg.3958"/>
<dbReference type="HOGENOM" id="CLU_036235_2_1_6"/>
<dbReference type="Proteomes" id="UP000001006">
    <property type="component" value="Chromosome"/>
</dbReference>
<dbReference type="Proteomes" id="UP000002673">
    <property type="component" value="Chromosome"/>
</dbReference>
<dbReference type="GO" id="GO:0005829">
    <property type="term" value="C:cytosol"/>
    <property type="evidence" value="ECO:0007669"/>
    <property type="project" value="UniProtKB-ARBA"/>
</dbReference>
<dbReference type="GO" id="GO:0015934">
    <property type="term" value="C:large ribosomal subunit"/>
    <property type="evidence" value="ECO:0007669"/>
    <property type="project" value="InterPro"/>
</dbReference>
<dbReference type="GO" id="GO:0019843">
    <property type="term" value="F:rRNA binding"/>
    <property type="evidence" value="ECO:0007669"/>
    <property type="project" value="UniProtKB-UniRule"/>
</dbReference>
<dbReference type="GO" id="GO:0003735">
    <property type="term" value="F:structural constituent of ribosome"/>
    <property type="evidence" value="ECO:0007669"/>
    <property type="project" value="InterPro"/>
</dbReference>
<dbReference type="GO" id="GO:0016740">
    <property type="term" value="F:transferase activity"/>
    <property type="evidence" value="ECO:0007669"/>
    <property type="project" value="InterPro"/>
</dbReference>
<dbReference type="GO" id="GO:0002181">
    <property type="term" value="P:cytoplasmic translation"/>
    <property type="evidence" value="ECO:0007669"/>
    <property type="project" value="TreeGrafter"/>
</dbReference>
<dbReference type="FunFam" id="2.30.30.30:FF:000001">
    <property type="entry name" value="50S ribosomal protein L2"/>
    <property type="match status" value="1"/>
</dbReference>
<dbReference type="FunFam" id="2.40.50.140:FF:000003">
    <property type="entry name" value="50S ribosomal protein L2"/>
    <property type="match status" value="1"/>
</dbReference>
<dbReference type="FunFam" id="4.10.950.10:FF:000001">
    <property type="entry name" value="50S ribosomal protein L2"/>
    <property type="match status" value="1"/>
</dbReference>
<dbReference type="Gene3D" id="2.30.30.30">
    <property type="match status" value="1"/>
</dbReference>
<dbReference type="Gene3D" id="2.40.50.140">
    <property type="entry name" value="Nucleic acid-binding proteins"/>
    <property type="match status" value="1"/>
</dbReference>
<dbReference type="Gene3D" id="4.10.950.10">
    <property type="entry name" value="Ribosomal protein L2, domain 3"/>
    <property type="match status" value="1"/>
</dbReference>
<dbReference type="HAMAP" id="MF_01320_B">
    <property type="entry name" value="Ribosomal_uL2_B"/>
    <property type="match status" value="1"/>
</dbReference>
<dbReference type="InterPro" id="IPR012340">
    <property type="entry name" value="NA-bd_OB-fold"/>
</dbReference>
<dbReference type="InterPro" id="IPR014722">
    <property type="entry name" value="Rib_uL2_dom2"/>
</dbReference>
<dbReference type="InterPro" id="IPR002171">
    <property type="entry name" value="Ribosomal_uL2"/>
</dbReference>
<dbReference type="InterPro" id="IPR005880">
    <property type="entry name" value="Ribosomal_uL2_bac/org-type"/>
</dbReference>
<dbReference type="InterPro" id="IPR022669">
    <property type="entry name" value="Ribosomal_uL2_C"/>
</dbReference>
<dbReference type="InterPro" id="IPR022671">
    <property type="entry name" value="Ribosomal_uL2_CS"/>
</dbReference>
<dbReference type="InterPro" id="IPR014726">
    <property type="entry name" value="Ribosomal_uL2_dom3"/>
</dbReference>
<dbReference type="InterPro" id="IPR022666">
    <property type="entry name" value="Ribosomal_uL2_RNA-bd_dom"/>
</dbReference>
<dbReference type="InterPro" id="IPR008991">
    <property type="entry name" value="Translation_prot_SH3-like_sf"/>
</dbReference>
<dbReference type="NCBIfam" id="TIGR01171">
    <property type="entry name" value="rplB_bact"/>
    <property type="match status" value="1"/>
</dbReference>
<dbReference type="PANTHER" id="PTHR13691:SF5">
    <property type="entry name" value="LARGE RIBOSOMAL SUBUNIT PROTEIN UL2M"/>
    <property type="match status" value="1"/>
</dbReference>
<dbReference type="PANTHER" id="PTHR13691">
    <property type="entry name" value="RIBOSOMAL PROTEIN L2"/>
    <property type="match status" value="1"/>
</dbReference>
<dbReference type="Pfam" id="PF00181">
    <property type="entry name" value="Ribosomal_L2"/>
    <property type="match status" value="1"/>
</dbReference>
<dbReference type="Pfam" id="PF03947">
    <property type="entry name" value="Ribosomal_L2_C"/>
    <property type="match status" value="1"/>
</dbReference>
<dbReference type="PIRSF" id="PIRSF002158">
    <property type="entry name" value="Ribosomal_L2"/>
    <property type="match status" value="1"/>
</dbReference>
<dbReference type="SMART" id="SM01383">
    <property type="entry name" value="Ribosomal_L2"/>
    <property type="match status" value="1"/>
</dbReference>
<dbReference type="SMART" id="SM01382">
    <property type="entry name" value="Ribosomal_L2_C"/>
    <property type="match status" value="1"/>
</dbReference>
<dbReference type="SUPFAM" id="SSF50249">
    <property type="entry name" value="Nucleic acid-binding proteins"/>
    <property type="match status" value="1"/>
</dbReference>
<dbReference type="SUPFAM" id="SSF50104">
    <property type="entry name" value="Translation proteins SH3-like domain"/>
    <property type="match status" value="1"/>
</dbReference>
<dbReference type="PROSITE" id="PS00467">
    <property type="entry name" value="RIBOSOMAL_L2"/>
    <property type="match status" value="1"/>
</dbReference>
<name>RL2_SHIFL</name>
<feature type="initiator methionine" description="Removed" evidence="1">
    <location>
        <position position="1"/>
    </location>
</feature>
<feature type="chain" id="PRO_0000129612" description="Large ribosomal subunit protein uL2">
    <location>
        <begin position="2"/>
        <end position="273"/>
    </location>
</feature>
<feature type="region of interest" description="Disordered" evidence="3">
    <location>
        <begin position="28"/>
        <end position="53"/>
    </location>
</feature>
<feature type="region of interest" description="Disordered" evidence="3">
    <location>
        <begin position="221"/>
        <end position="273"/>
    </location>
</feature>
<feature type="compositionally biased region" description="Low complexity" evidence="3">
    <location>
        <begin position="39"/>
        <end position="48"/>
    </location>
</feature>
<feature type="modified residue" description="N6-acetyllysine" evidence="2">
    <location>
        <position position="242"/>
    </location>
</feature>
<comment type="function">
    <text evidence="2">One of the primary rRNA binding proteins. Required for association of the 30S and 50S subunits to form the 70S ribosome, for tRNA binding and peptide bond formation. It has been suggested to have peptidyltransferase activity; this is somewhat controversial. Makes several contacts with the 16S rRNA in the 70S ribosome.</text>
</comment>
<comment type="subunit">
    <text evidence="2">Part of the 50S ribosomal subunit. Forms a bridge to the 30S subunit in the 70S ribosome.</text>
</comment>
<comment type="similarity">
    <text evidence="2">Belongs to the universal ribosomal protein uL2 family.</text>
</comment>